<organism>
    <name type="scientific">Amoebophilus asiaticus (strain 5a2)</name>
    <dbReference type="NCBI Taxonomy" id="452471"/>
    <lineage>
        <taxon>Bacteria</taxon>
        <taxon>Pseudomonadati</taxon>
        <taxon>Bacteroidota</taxon>
        <taxon>Cytophagia</taxon>
        <taxon>Cytophagales</taxon>
        <taxon>Amoebophilaceae</taxon>
        <taxon>Candidatus Amoebophilus</taxon>
    </lineage>
</organism>
<protein>
    <recommendedName>
        <fullName evidence="1">Arginine--tRNA ligase</fullName>
        <ecNumber evidence="1">6.1.1.19</ecNumber>
    </recommendedName>
    <alternativeName>
        <fullName evidence="1">Arginyl-tRNA synthetase</fullName>
        <shortName evidence="1">ArgRS</shortName>
    </alternativeName>
</protein>
<accession>B3ERZ8</accession>
<keyword id="KW-0030">Aminoacyl-tRNA synthetase</keyword>
<keyword id="KW-0067">ATP-binding</keyword>
<keyword id="KW-0963">Cytoplasm</keyword>
<keyword id="KW-0436">Ligase</keyword>
<keyword id="KW-0547">Nucleotide-binding</keyword>
<keyword id="KW-0648">Protein biosynthesis</keyword>
<keyword id="KW-1185">Reference proteome</keyword>
<feature type="chain" id="PRO_1000095332" description="Arginine--tRNA ligase">
    <location>
        <begin position="1"/>
        <end position="596"/>
    </location>
</feature>
<feature type="short sequence motif" description="'HIGH' region">
    <location>
        <begin position="123"/>
        <end position="133"/>
    </location>
</feature>
<proteinExistence type="inferred from homology"/>
<gene>
    <name evidence="1" type="primary">argS</name>
    <name type="ordered locus">Aasi_0599</name>
</gene>
<evidence type="ECO:0000255" key="1">
    <source>
        <dbReference type="HAMAP-Rule" id="MF_00123"/>
    </source>
</evidence>
<comment type="catalytic activity">
    <reaction evidence="1">
        <text>tRNA(Arg) + L-arginine + ATP = L-arginyl-tRNA(Arg) + AMP + diphosphate</text>
        <dbReference type="Rhea" id="RHEA:20301"/>
        <dbReference type="Rhea" id="RHEA-COMP:9658"/>
        <dbReference type="Rhea" id="RHEA-COMP:9673"/>
        <dbReference type="ChEBI" id="CHEBI:30616"/>
        <dbReference type="ChEBI" id="CHEBI:32682"/>
        <dbReference type="ChEBI" id="CHEBI:33019"/>
        <dbReference type="ChEBI" id="CHEBI:78442"/>
        <dbReference type="ChEBI" id="CHEBI:78513"/>
        <dbReference type="ChEBI" id="CHEBI:456215"/>
        <dbReference type="EC" id="6.1.1.19"/>
    </reaction>
</comment>
<comment type="subunit">
    <text evidence="1">Monomer.</text>
</comment>
<comment type="subcellular location">
    <subcellularLocation>
        <location evidence="1">Cytoplasm</location>
    </subcellularLocation>
</comment>
<comment type="similarity">
    <text evidence="1">Belongs to the class-I aminoacyl-tRNA synthetase family.</text>
</comment>
<dbReference type="EC" id="6.1.1.19" evidence="1"/>
<dbReference type="EMBL" id="CP001102">
    <property type="protein sequence ID" value="ACE06000.1"/>
    <property type="molecule type" value="Genomic_DNA"/>
</dbReference>
<dbReference type="RefSeq" id="WP_012472766.1">
    <property type="nucleotide sequence ID" value="NC_010830.1"/>
</dbReference>
<dbReference type="SMR" id="B3ERZ8"/>
<dbReference type="STRING" id="452471.Aasi_0599"/>
<dbReference type="KEGG" id="aas:Aasi_0599"/>
<dbReference type="eggNOG" id="COG0018">
    <property type="taxonomic scope" value="Bacteria"/>
</dbReference>
<dbReference type="HOGENOM" id="CLU_006406_6_1_10"/>
<dbReference type="OrthoDB" id="9805987at2"/>
<dbReference type="Proteomes" id="UP000001227">
    <property type="component" value="Chromosome"/>
</dbReference>
<dbReference type="GO" id="GO:0005737">
    <property type="term" value="C:cytoplasm"/>
    <property type="evidence" value="ECO:0007669"/>
    <property type="project" value="UniProtKB-SubCell"/>
</dbReference>
<dbReference type="GO" id="GO:0004814">
    <property type="term" value="F:arginine-tRNA ligase activity"/>
    <property type="evidence" value="ECO:0007669"/>
    <property type="project" value="UniProtKB-UniRule"/>
</dbReference>
<dbReference type="GO" id="GO:0005524">
    <property type="term" value="F:ATP binding"/>
    <property type="evidence" value="ECO:0007669"/>
    <property type="project" value="UniProtKB-UniRule"/>
</dbReference>
<dbReference type="GO" id="GO:0006420">
    <property type="term" value="P:arginyl-tRNA aminoacylation"/>
    <property type="evidence" value="ECO:0007669"/>
    <property type="project" value="UniProtKB-UniRule"/>
</dbReference>
<dbReference type="Gene3D" id="3.30.1360.70">
    <property type="entry name" value="Arginyl tRNA synthetase N-terminal domain"/>
    <property type="match status" value="1"/>
</dbReference>
<dbReference type="Gene3D" id="3.40.50.620">
    <property type="entry name" value="HUPs"/>
    <property type="match status" value="1"/>
</dbReference>
<dbReference type="Gene3D" id="1.10.730.10">
    <property type="entry name" value="Isoleucyl-tRNA Synthetase, Domain 1"/>
    <property type="match status" value="1"/>
</dbReference>
<dbReference type="HAMAP" id="MF_00123">
    <property type="entry name" value="Arg_tRNA_synth"/>
    <property type="match status" value="1"/>
</dbReference>
<dbReference type="InterPro" id="IPR001412">
    <property type="entry name" value="aa-tRNA-synth_I_CS"/>
</dbReference>
<dbReference type="InterPro" id="IPR001278">
    <property type="entry name" value="Arg-tRNA-ligase"/>
</dbReference>
<dbReference type="InterPro" id="IPR005148">
    <property type="entry name" value="Arg-tRNA-synth_N"/>
</dbReference>
<dbReference type="InterPro" id="IPR036695">
    <property type="entry name" value="Arg-tRNA-synth_N_sf"/>
</dbReference>
<dbReference type="InterPro" id="IPR035684">
    <property type="entry name" value="ArgRS_core"/>
</dbReference>
<dbReference type="InterPro" id="IPR008909">
    <property type="entry name" value="DALR_anticod-bd"/>
</dbReference>
<dbReference type="InterPro" id="IPR014729">
    <property type="entry name" value="Rossmann-like_a/b/a_fold"/>
</dbReference>
<dbReference type="InterPro" id="IPR009080">
    <property type="entry name" value="tRNAsynth_Ia_anticodon-bd"/>
</dbReference>
<dbReference type="NCBIfam" id="TIGR00456">
    <property type="entry name" value="argS"/>
    <property type="match status" value="1"/>
</dbReference>
<dbReference type="PANTHER" id="PTHR11956:SF5">
    <property type="entry name" value="ARGININE--TRNA LIGASE, CYTOPLASMIC"/>
    <property type="match status" value="1"/>
</dbReference>
<dbReference type="PANTHER" id="PTHR11956">
    <property type="entry name" value="ARGINYL-TRNA SYNTHETASE"/>
    <property type="match status" value="1"/>
</dbReference>
<dbReference type="Pfam" id="PF05746">
    <property type="entry name" value="DALR_1"/>
    <property type="match status" value="1"/>
</dbReference>
<dbReference type="Pfam" id="PF00750">
    <property type="entry name" value="tRNA-synt_1d"/>
    <property type="match status" value="1"/>
</dbReference>
<dbReference type="PRINTS" id="PR01038">
    <property type="entry name" value="TRNASYNTHARG"/>
</dbReference>
<dbReference type="SMART" id="SM01016">
    <property type="entry name" value="Arg_tRNA_synt_N"/>
    <property type="match status" value="1"/>
</dbReference>
<dbReference type="SMART" id="SM00836">
    <property type="entry name" value="DALR_1"/>
    <property type="match status" value="1"/>
</dbReference>
<dbReference type="SUPFAM" id="SSF47323">
    <property type="entry name" value="Anticodon-binding domain of a subclass of class I aminoacyl-tRNA synthetases"/>
    <property type="match status" value="1"/>
</dbReference>
<dbReference type="SUPFAM" id="SSF55190">
    <property type="entry name" value="Arginyl-tRNA synthetase (ArgRS), N-terminal 'additional' domain"/>
    <property type="match status" value="1"/>
</dbReference>
<dbReference type="SUPFAM" id="SSF52374">
    <property type="entry name" value="Nucleotidylyl transferase"/>
    <property type="match status" value="1"/>
</dbReference>
<dbReference type="PROSITE" id="PS00178">
    <property type="entry name" value="AA_TRNA_LIGASE_I"/>
    <property type="match status" value="1"/>
</dbReference>
<reference key="1">
    <citation type="journal article" date="2010" name="J. Bacteriol.">
        <title>The genome of the amoeba symbiont 'Candidatus Amoebophilus asiaticus' reveals common mechanisms for host cell interaction among amoeba-associated bacteria.</title>
        <authorList>
            <person name="Schmitz-Esser S."/>
            <person name="Tischler P."/>
            <person name="Arnold R."/>
            <person name="Montanaro J."/>
            <person name="Wagner M."/>
            <person name="Rattei T."/>
            <person name="Horn M."/>
        </authorList>
    </citation>
    <scope>NUCLEOTIDE SEQUENCE [LARGE SCALE GENOMIC DNA]</scope>
    <source>
        <strain>5a2</strain>
    </source>
</reference>
<sequence>MNIDLVLREAIQNAFQSVFELSIPLADVNLQPTRKEFEGTHTLIVFPFTTTCKVSPEVIANKIGDWMQTNTQAIASYNVVKGFLNLSIKDTIWLASFNQMYQNKHFGYLPSNRQKIVVEYSSPNTNKPLHLGHLRNNFLGHAVSEILQAAGYEVYKVNLVNDRGIHICKSMVAYQHWGRGETPESRGLKGDQLVGKYYVKFDQVYKEQVAALTQTLGDAEQAAKQAPLLQEAQVMLKQWEAGNEEVLALWRKMNGWVYDGFDITYQKLGITFDKVYYESQTYLLGKEVVAEGLAKGTFYKKQDGSVWIDLTQEGLDEKLLLRADGTSVYITQDLGTADLRYQDFKPNKLVYVVGNEQDYHFEVLAKIMARLGRPYATDLYHLSYGMVDLPTGKMKSREGTVVDADMLIDEMIETAEEHTRELGKIDGFSKEEAKDLYHILAMGALKYFLLRVDAKKRLLFDPQASIDFQGDTGPFIQYTHARIAAVLRKVQQADIAFNDIVEQENFVLHPLEREVIVELAAFPKKLQESALAYAPAILAQHVLEIAKAYNRMYAELSILHEQDTKVQLFRIQLSVLVAQVIKTVMHLLGIVVPERM</sequence>
<name>SYR_AMOA5</name>